<keyword id="KW-0963">Cytoplasm</keyword>
<keyword id="KW-0210">Decarboxylase</keyword>
<keyword id="KW-0456">Lyase</keyword>
<keyword id="KW-0627">Porphyrin biosynthesis</keyword>
<accession>A9VI98</accession>
<organism>
    <name type="scientific">Bacillus mycoides (strain KBAB4)</name>
    <name type="common">Bacillus weihenstephanensis</name>
    <dbReference type="NCBI Taxonomy" id="315730"/>
    <lineage>
        <taxon>Bacteria</taxon>
        <taxon>Bacillati</taxon>
        <taxon>Bacillota</taxon>
        <taxon>Bacilli</taxon>
        <taxon>Bacillales</taxon>
        <taxon>Bacillaceae</taxon>
        <taxon>Bacillus</taxon>
        <taxon>Bacillus cereus group</taxon>
    </lineage>
</organism>
<sequence>MVRTINETFLKACRGERTEYVPAWYMRQAGRSQPEYRKIKEKYSLFEITHNPELCAYVTKLPVDQYNVDAAILYKDIMSPLPAIGVDVEIKSGIGPVIDSPIRSLQDVEKLGEINPEDDVPYILDTIRLLTTEMLDVPLIGFSGAPFTLASYMIEGGPSRNYHNTKAFMYAEPKAWFALMDKLADMVITYLKAQINAGVKAVQIFDSWVGAVNVADYRIFIKPAMERIFAEVRPMGVPMIMHGVGAAHLVNEWHDLPLDVVGLDWRLPIEEARARGVHRAVQGNMDPSFLLAPWPVIEEHVKGILDQGMKQPGYIFNLGHGVFPEVNPDTLKRLTTFIHEYSKEQLAK</sequence>
<gene>
    <name evidence="1" type="primary">hemE</name>
    <name type="ordered locus">BcerKBAB4_0989</name>
</gene>
<feature type="chain" id="PRO_1000099973" description="Uroporphyrinogen decarboxylase">
    <location>
        <begin position="1"/>
        <end position="348"/>
    </location>
</feature>
<feature type="binding site" evidence="1">
    <location>
        <begin position="27"/>
        <end position="31"/>
    </location>
    <ligand>
        <name>substrate</name>
    </ligand>
</feature>
<feature type="binding site" evidence="1">
    <location>
        <position position="46"/>
    </location>
    <ligand>
        <name>substrate</name>
    </ligand>
</feature>
<feature type="binding site" evidence="1">
    <location>
        <position position="76"/>
    </location>
    <ligand>
        <name>substrate</name>
    </ligand>
</feature>
<feature type="binding site" evidence="1">
    <location>
        <position position="152"/>
    </location>
    <ligand>
        <name>substrate</name>
    </ligand>
</feature>
<feature type="binding site" evidence="1">
    <location>
        <position position="207"/>
    </location>
    <ligand>
        <name>substrate</name>
    </ligand>
</feature>
<feature type="binding site" evidence="1">
    <location>
        <position position="320"/>
    </location>
    <ligand>
        <name>substrate</name>
    </ligand>
</feature>
<feature type="site" description="Transition state stabilizer" evidence="1">
    <location>
        <position position="76"/>
    </location>
</feature>
<proteinExistence type="inferred from homology"/>
<dbReference type="EC" id="4.1.1.37" evidence="1"/>
<dbReference type="EMBL" id="CP000903">
    <property type="protein sequence ID" value="ABY42241.1"/>
    <property type="molecule type" value="Genomic_DNA"/>
</dbReference>
<dbReference type="RefSeq" id="WP_012260528.1">
    <property type="nucleotide sequence ID" value="NC_010184.1"/>
</dbReference>
<dbReference type="SMR" id="A9VI98"/>
<dbReference type="KEGG" id="bwe:BcerKBAB4_0989"/>
<dbReference type="eggNOG" id="COG0407">
    <property type="taxonomic scope" value="Bacteria"/>
</dbReference>
<dbReference type="HOGENOM" id="CLU_040933_0_1_9"/>
<dbReference type="UniPathway" id="UPA00251">
    <property type="reaction ID" value="UER00321"/>
</dbReference>
<dbReference type="Proteomes" id="UP000002154">
    <property type="component" value="Chromosome"/>
</dbReference>
<dbReference type="GO" id="GO:0005829">
    <property type="term" value="C:cytosol"/>
    <property type="evidence" value="ECO:0007669"/>
    <property type="project" value="TreeGrafter"/>
</dbReference>
<dbReference type="GO" id="GO:0004853">
    <property type="term" value="F:uroporphyrinogen decarboxylase activity"/>
    <property type="evidence" value="ECO:0007669"/>
    <property type="project" value="UniProtKB-UniRule"/>
</dbReference>
<dbReference type="GO" id="GO:0006782">
    <property type="term" value="P:protoporphyrinogen IX biosynthetic process"/>
    <property type="evidence" value="ECO:0007669"/>
    <property type="project" value="UniProtKB-UniRule"/>
</dbReference>
<dbReference type="CDD" id="cd00717">
    <property type="entry name" value="URO-D"/>
    <property type="match status" value="1"/>
</dbReference>
<dbReference type="FunFam" id="3.20.20.210:FF:000005">
    <property type="entry name" value="Uroporphyrinogen decarboxylase"/>
    <property type="match status" value="1"/>
</dbReference>
<dbReference type="Gene3D" id="3.20.20.210">
    <property type="match status" value="1"/>
</dbReference>
<dbReference type="HAMAP" id="MF_00218">
    <property type="entry name" value="URO_D"/>
    <property type="match status" value="1"/>
</dbReference>
<dbReference type="InterPro" id="IPR038071">
    <property type="entry name" value="UROD/MetE-like_sf"/>
</dbReference>
<dbReference type="InterPro" id="IPR006361">
    <property type="entry name" value="Uroporphyrinogen_deCO2ase_HemE"/>
</dbReference>
<dbReference type="InterPro" id="IPR000257">
    <property type="entry name" value="Uroporphyrinogen_deCOase"/>
</dbReference>
<dbReference type="NCBIfam" id="TIGR01464">
    <property type="entry name" value="hemE"/>
    <property type="match status" value="1"/>
</dbReference>
<dbReference type="PANTHER" id="PTHR21091">
    <property type="entry name" value="METHYLTETRAHYDROFOLATE:HOMOCYSTEINE METHYLTRANSFERASE RELATED"/>
    <property type="match status" value="1"/>
</dbReference>
<dbReference type="PANTHER" id="PTHR21091:SF169">
    <property type="entry name" value="UROPORPHYRINOGEN DECARBOXYLASE"/>
    <property type="match status" value="1"/>
</dbReference>
<dbReference type="Pfam" id="PF01208">
    <property type="entry name" value="URO-D"/>
    <property type="match status" value="1"/>
</dbReference>
<dbReference type="SUPFAM" id="SSF51726">
    <property type="entry name" value="UROD/MetE-like"/>
    <property type="match status" value="1"/>
</dbReference>
<dbReference type="PROSITE" id="PS00906">
    <property type="entry name" value="UROD_1"/>
    <property type="match status" value="1"/>
</dbReference>
<dbReference type="PROSITE" id="PS00907">
    <property type="entry name" value="UROD_2"/>
    <property type="match status" value="1"/>
</dbReference>
<reference key="1">
    <citation type="journal article" date="2008" name="Chem. Biol. Interact.">
        <title>Extending the Bacillus cereus group genomics to putative food-borne pathogens of different toxicity.</title>
        <authorList>
            <person name="Lapidus A."/>
            <person name="Goltsman E."/>
            <person name="Auger S."/>
            <person name="Galleron N."/>
            <person name="Segurens B."/>
            <person name="Dossat C."/>
            <person name="Land M.L."/>
            <person name="Broussolle V."/>
            <person name="Brillard J."/>
            <person name="Guinebretiere M.-H."/>
            <person name="Sanchis V."/>
            <person name="Nguen-the C."/>
            <person name="Lereclus D."/>
            <person name="Richardson P."/>
            <person name="Wincker P."/>
            <person name="Weissenbach J."/>
            <person name="Ehrlich S.D."/>
            <person name="Sorokin A."/>
        </authorList>
    </citation>
    <scope>NUCLEOTIDE SEQUENCE [LARGE SCALE GENOMIC DNA]</scope>
    <source>
        <strain>KBAB4</strain>
    </source>
</reference>
<evidence type="ECO:0000255" key="1">
    <source>
        <dbReference type="HAMAP-Rule" id="MF_00218"/>
    </source>
</evidence>
<protein>
    <recommendedName>
        <fullName evidence="1">Uroporphyrinogen decarboxylase</fullName>
        <shortName evidence="1">UPD</shortName>
        <shortName evidence="1">URO-D</shortName>
        <ecNumber evidence="1">4.1.1.37</ecNumber>
    </recommendedName>
</protein>
<comment type="function">
    <text evidence="1">Catalyzes the decarboxylation of four acetate groups of uroporphyrinogen-III to yield coproporphyrinogen-III.</text>
</comment>
<comment type="catalytic activity">
    <reaction evidence="1">
        <text>uroporphyrinogen III + 4 H(+) = coproporphyrinogen III + 4 CO2</text>
        <dbReference type="Rhea" id="RHEA:19865"/>
        <dbReference type="ChEBI" id="CHEBI:15378"/>
        <dbReference type="ChEBI" id="CHEBI:16526"/>
        <dbReference type="ChEBI" id="CHEBI:57308"/>
        <dbReference type="ChEBI" id="CHEBI:57309"/>
        <dbReference type="EC" id="4.1.1.37"/>
    </reaction>
</comment>
<comment type="pathway">
    <text evidence="1">Porphyrin-containing compound metabolism; protoporphyrin-IX biosynthesis; coproporphyrinogen-III from 5-aminolevulinate: step 4/4.</text>
</comment>
<comment type="subunit">
    <text evidence="1">Homodimer.</text>
</comment>
<comment type="subcellular location">
    <subcellularLocation>
        <location evidence="1">Cytoplasm</location>
    </subcellularLocation>
</comment>
<comment type="similarity">
    <text evidence="1">Belongs to the uroporphyrinogen decarboxylase family.</text>
</comment>
<name>DCUP_BACMK</name>